<feature type="chain" id="PRO_0000317312" description="Uncharacterized acyltransferase C1851.02">
    <location>
        <begin position="1"/>
        <end position="279"/>
    </location>
</feature>
<feature type="transmembrane region" description="Helical" evidence="1">
    <location>
        <begin position="1"/>
        <end position="21"/>
    </location>
</feature>
<feature type="transmembrane region" description="Helical" evidence="1">
    <location>
        <begin position="38"/>
        <end position="58"/>
    </location>
</feature>
<feature type="transmembrane region" description="Helical" evidence="1">
    <location>
        <begin position="131"/>
        <end position="151"/>
    </location>
</feature>
<gene>
    <name type="ORF">SPAC1851.02</name>
</gene>
<sequence length="279" mass="31393">MGFIKSTLLATVTVFVGLCGINRFFTLPKCIRYHFRYFACHTFLAISSAYGVIASVVARLCGYPVMGQYLTAKAYYGLASTILDFRFKIENEEILRKHKSAVLVVNHQSELDILAIGRTFGPNYSVIAKKSLRYVPILGWFMILSDVVFIDRSRRSDAIQLFAKAARRMRKENISIWVFAEGTRSYSLKPCLLPLKKGAFHLAVQAQVPIIPIAIQTYGHLFHPPTKVFNKGEALIKVLDPIPTEGKTAEDVNDLLHETETAMNNALVEIDDYGKVKKQ</sequence>
<accession>Q9US20</accession>
<reference key="1">
    <citation type="journal article" date="2002" name="Nature">
        <title>The genome sequence of Schizosaccharomyces pombe.</title>
        <authorList>
            <person name="Wood V."/>
            <person name="Gwilliam R."/>
            <person name="Rajandream M.A."/>
            <person name="Lyne M.H."/>
            <person name="Lyne R."/>
            <person name="Stewart A."/>
            <person name="Sgouros J.G."/>
            <person name="Peat N."/>
            <person name="Hayles J."/>
            <person name="Baker S.G."/>
            <person name="Basham D."/>
            <person name="Bowman S."/>
            <person name="Brooks K."/>
            <person name="Brown D."/>
            <person name="Brown S."/>
            <person name="Chillingworth T."/>
            <person name="Churcher C.M."/>
            <person name="Collins M."/>
            <person name="Connor R."/>
            <person name="Cronin A."/>
            <person name="Davis P."/>
            <person name="Feltwell T."/>
            <person name="Fraser A."/>
            <person name="Gentles S."/>
            <person name="Goble A."/>
            <person name="Hamlin N."/>
            <person name="Harris D.E."/>
            <person name="Hidalgo J."/>
            <person name="Hodgson G."/>
            <person name="Holroyd S."/>
            <person name="Hornsby T."/>
            <person name="Howarth S."/>
            <person name="Huckle E.J."/>
            <person name="Hunt S."/>
            <person name="Jagels K."/>
            <person name="James K.D."/>
            <person name="Jones L."/>
            <person name="Jones M."/>
            <person name="Leather S."/>
            <person name="McDonald S."/>
            <person name="McLean J."/>
            <person name="Mooney P."/>
            <person name="Moule S."/>
            <person name="Mungall K.L."/>
            <person name="Murphy L.D."/>
            <person name="Niblett D."/>
            <person name="Odell C."/>
            <person name="Oliver K."/>
            <person name="O'Neil S."/>
            <person name="Pearson D."/>
            <person name="Quail M.A."/>
            <person name="Rabbinowitsch E."/>
            <person name="Rutherford K.M."/>
            <person name="Rutter S."/>
            <person name="Saunders D."/>
            <person name="Seeger K."/>
            <person name="Sharp S."/>
            <person name="Skelton J."/>
            <person name="Simmonds M.N."/>
            <person name="Squares R."/>
            <person name="Squares S."/>
            <person name="Stevens K."/>
            <person name="Taylor K."/>
            <person name="Taylor R.G."/>
            <person name="Tivey A."/>
            <person name="Walsh S.V."/>
            <person name="Warren T."/>
            <person name="Whitehead S."/>
            <person name="Woodward J.R."/>
            <person name="Volckaert G."/>
            <person name="Aert R."/>
            <person name="Robben J."/>
            <person name="Grymonprez B."/>
            <person name="Weltjens I."/>
            <person name="Vanstreels E."/>
            <person name="Rieger M."/>
            <person name="Schaefer M."/>
            <person name="Mueller-Auer S."/>
            <person name="Gabel C."/>
            <person name="Fuchs M."/>
            <person name="Duesterhoeft A."/>
            <person name="Fritzc C."/>
            <person name="Holzer E."/>
            <person name="Moestl D."/>
            <person name="Hilbert H."/>
            <person name="Borzym K."/>
            <person name="Langer I."/>
            <person name="Beck A."/>
            <person name="Lehrach H."/>
            <person name="Reinhardt R."/>
            <person name="Pohl T.M."/>
            <person name="Eger P."/>
            <person name="Zimmermann W."/>
            <person name="Wedler H."/>
            <person name="Wambutt R."/>
            <person name="Purnelle B."/>
            <person name="Goffeau A."/>
            <person name="Cadieu E."/>
            <person name="Dreano S."/>
            <person name="Gloux S."/>
            <person name="Lelaure V."/>
            <person name="Mottier S."/>
            <person name="Galibert F."/>
            <person name="Aves S.J."/>
            <person name="Xiang Z."/>
            <person name="Hunt C."/>
            <person name="Moore K."/>
            <person name="Hurst S.M."/>
            <person name="Lucas M."/>
            <person name="Rochet M."/>
            <person name="Gaillardin C."/>
            <person name="Tallada V.A."/>
            <person name="Garzon A."/>
            <person name="Thode G."/>
            <person name="Daga R.R."/>
            <person name="Cruzado L."/>
            <person name="Jimenez J."/>
            <person name="Sanchez M."/>
            <person name="del Rey F."/>
            <person name="Benito J."/>
            <person name="Dominguez A."/>
            <person name="Revuelta J.L."/>
            <person name="Moreno S."/>
            <person name="Armstrong J."/>
            <person name="Forsburg S.L."/>
            <person name="Cerutti L."/>
            <person name="Lowe T."/>
            <person name="McCombie W.R."/>
            <person name="Paulsen I."/>
            <person name="Potashkin J."/>
            <person name="Shpakovski G.V."/>
            <person name="Ussery D."/>
            <person name="Barrell B.G."/>
            <person name="Nurse P."/>
        </authorList>
    </citation>
    <scope>NUCLEOTIDE SEQUENCE [LARGE SCALE GENOMIC DNA]</scope>
    <source>
        <strain>972 / ATCC 24843</strain>
    </source>
</reference>
<reference key="2">
    <citation type="journal article" date="2006" name="Nat. Biotechnol.">
        <title>ORFeome cloning and global analysis of protein localization in the fission yeast Schizosaccharomyces pombe.</title>
        <authorList>
            <person name="Matsuyama A."/>
            <person name="Arai R."/>
            <person name="Yashiroda Y."/>
            <person name="Shirai A."/>
            <person name="Kamata A."/>
            <person name="Sekido S."/>
            <person name="Kobayashi Y."/>
            <person name="Hashimoto A."/>
            <person name="Hamamoto M."/>
            <person name="Hiraoka Y."/>
            <person name="Horinouchi S."/>
            <person name="Yoshida M."/>
        </authorList>
    </citation>
    <scope>SUBCELLULAR LOCATION [LARGE SCALE ANALYSIS]</scope>
</reference>
<organism>
    <name type="scientific">Schizosaccharomyces pombe (strain 972 / ATCC 24843)</name>
    <name type="common">Fission yeast</name>
    <dbReference type="NCBI Taxonomy" id="284812"/>
    <lineage>
        <taxon>Eukaryota</taxon>
        <taxon>Fungi</taxon>
        <taxon>Dikarya</taxon>
        <taxon>Ascomycota</taxon>
        <taxon>Taphrinomycotina</taxon>
        <taxon>Schizosaccharomycetes</taxon>
        <taxon>Schizosaccharomycetales</taxon>
        <taxon>Schizosaccharomycetaceae</taxon>
        <taxon>Schizosaccharomyces</taxon>
    </lineage>
</organism>
<proteinExistence type="inferred from homology"/>
<protein>
    <recommendedName>
        <fullName>Uncharacterized acyltransferase C1851.02</fullName>
        <ecNumber>2.3.-.-</ecNumber>
    </recommendedName>
</protein>
<keyword id="KW-0012">Acyltransferase</keyword>
<keyword id="KW-0256">Endoplasmic reticulum</keyword>
<keyword id="KW-0472">Membrane</keyword>
<keyword id="KW-1185">Reference proteome</keyword>
<keyword id="KW-0808">Transferase</keyword>
<keyword id="KW-0812">Transmembrane</keyword>
<keyword id="KW-1133">Transmembrane helix</keyword>
<dbReference type="EC" id="2.3.-.-"/>
<dbReference type="EMBL" id="CU329670">
    <property type="protein sequence ID" value="CAB62428.1"/>
    <property type="molecule type" value="Genomic_DNA"/>
</dbReference>
<dbReference type="PIR" id="T50125">
    <property type="entry name" value="T50125"/>
</dbReference>
<dbReference type="SMR" id="Q9US20"/>
<dbReference type="BioGRID" id="279016">
    <property type="interactions" value="8"/>
</dbReference>
<dbReference type="FunCoup" id="Q9US20">
    <property type="interactions" value="251"/>
</dbReference>
<dbReference type="STRING" id="284812.Q9US20"/>
<dbReference type="iPTMnet" id="Q9US20"/>
<dbReference type="PaxDb" id="4896-SPAC1851.02.1"/>
<dbReference type="EnsemblFungi" id="SPAC1851.02.1">
    <property type="protein sequence ID" value="SPAC1851.02.1:pep"/>
    <property type="gene ID" value="SPAC1851.02"/>
</dbReference>
<dbReference type="KEGG" id="spo:2542560"/>
<dbReference type="PomBase" id="SPAC1851.02"/>
<dbReference type="VEuPathDB" id="FungiDB:SPAC1851.02"/>
<dbReference type="eggNOG" id="KOG2848">
    <property type="taxonomic scope" value="Eukaryota"/>
</dbReference>
<dbReference type="HOGENOM" id="CLU_027938_10_0_1"/>
<dbReference type="InParanoid" id="Q9US20"/>
<dbReference type="OMA" id="LLYQWSM"/>
<dbReference type="PhylomeDB" id="Q9US20"/>
<dbReference type="Reactome" id="R-SPO-1483166">
    <property type="pathway name" value="Synthesis of PA"/>
</dbReference>
<dbReference type="Reactome" id="R-SPO-6798695">
    <property type="pathway name" value="Neutrophil degranulation"/>
</dbReference>
<dbReference type="PRO" id="PR:Q9US20"/>
<dbReference type="Proteomes" id="UP000002485">
    <property type="component" value="Chromosome I"/>
</dbReference>
<dbReference type="GO" id="GO:0005783">
    <property type="term" value="C:endoplasmic reticulum"/>
    <property type="evidence" value="ECO:0007005"/>
    <property type="project" value="PomBase"/>
</dbReference>
<dbReference type="GO" id="GO:0005789">
    <property type="term" value="C:endoplasmic reticulum membrane"/>
    <property type="evidence" value="ECO:0000305"/>
    <property type="project" value="PomBase"/>
</dbReference>
<dbReference type="GO" id="GO:0003841">
    <property type="term" value="F:1-acylglycerol-3-phosphate O-acyltransferase activity"/>
    <property type="evidence" value="ECO:0000318"/>
    <property type="project" value="GO_Central"/>
</dbReference>
<dbReference type="GO" id="GO:0006654">
    <property type="term" value="P:phosphatidic acid biosynthetic process"/>
    <property type="evidence" value="ECO:0000318"/>
    <property type="project" value="GO_Central"/>
</dbReference>
<dbReference type="CDD" id="cd07989">
    <property type="entry name" value="LPLAT_AGPAT-like"/>
    <property type="match status" value="1"/>
</dbReference>
<dbReference type="InterPro" id="IPR004552">
    <property type="entry name" value="AGP_acyltrans"/>
</dbReference>
<dbReference type="InterPro" id="IPR002123">
    <property type="entry name" value="Plipid/glycerol_acylTrfase"/>
</dbReference>
<dbReference type="NCBIfam" id="TIGR00530">
    <property type="entry name" value="AGP_acyltrn"/>
    <property type="match status" value="1"/>
</dbReference>
<dbReference type="PANTHER" id="PTHR10434">
    <property type="entry name" value="1-ACYL-SN-GLYCEROL-3-PHOSPHATE ACYLTRANSFERASE"/>
    <property type="match status" value="1"/>
</dbReference>
<dbReference type="PANTHER" id="PTHR10434:SF11">
    <property type="entry name" value="1-ACYL-SN-GLYCEROL-3-PHOSPHATE ACYLTRANSFERASE"/>
    <property type="match status" value="1"/>
</dbReference>
<dbReference type="Pfam" id="PF01553">
    <property type="entry name" value="Acyltransferase"/>
    <property type="match status" value="1"/>
</dbReference>
<dbReference type="SMART" id="SM00563">
    <property type="entry name" value="PlsC"/>
    <property type="match status" value="1"/>
</dbReference>
<dbReference type="SUPFAM" id="SSF69593">
    <property type="entry name" value="Glycerol-3-phosphate (1)-acyltransferase"/>
    <property type="match status" value="1"/>
</dbReference>
<comment type="subcellular location">
    <subcellularLocation>
        <location evidence="2">Endoplasmic reticulum membrane</location>
        <topology evidence="2">Multi-pass membrane protein</topology>
    </subcellularLocation>
</comment>
<comment type="similarity">
    <text evidence="3">Belongs to the 1-acyl-sn-glycerol-3-phosphate acyltransferase family.</text>
</comment>
<name>YLD2_SCHPO</name>
<evidence type="ECO:0000255" key="1"/>
<evidence type="ECO:0000269" key="2">
    <source>
    </source>
</evidence>
<evidence type="ECO:0000305" key="3"/>